<dbReference type="EC" id="2.7.4.3" evidence="1"/>
<dbReference type="EMBL" id="CP001463">
    <property type="protein sequence ID" value="ACS89896.1"/>
    <property type="molecule type" value="Genomic_DNA"/>
</dbReference>
<dbReference type="RefSeq" id="WP_015849116.1">
    <property type="nucleotide sequence ID" value="NC_012883.1"/>
</dbReference>
<dbReference type="SMR" id="C6A2Q1"/>
<dbReference type="STRING" id="604354.TSIB_0835"/>
<dbReference type="GeneID" id="8095826"/>
<dbReference type="KEGG" id="tsi:TSIB_0835"/>
<dbReference type="eggNOG" id="arCOG01046">
    <property type="taxonomic scope" value="Archaea"/>
</dbReference>
<dbReference type="HOGENOM" id="CLU_032354_1_2_2"/>
<dbReference type="OrthoDB" id="31230at2157"/>
<dbReference type="UniPathway" id="UPA00588">
    <property type="reaction ID" value="UER00649"/>
</dbReference>
<dbReference type="Proteomes" id="UP000009079">
    <property type="component" value="Chromosome"/>
</dbReference>
<dbReference type="GO" id="GO:0005737">
    <property type="term" value="C:cytoplasm"/>
    <property type="evidence" value="ECO:0007669"/>
    <property type="project" value="UniProtKB-SubCell"/>
</dbReference>
<dbReference type="GO" id="GO:0004017">
    <property type="term" value="F:adenylate kinase activity"/>
    <property type="evidence" value="ECO:0007669"/>
    <property type="project" value="UniProtKB-UniRule"/>
</dbReference>
<dbReference type="GO" id="GO:0005524">
    <property type="term" value="F:ATP binding"/>
    <property type="evidence" value="ECO:0007669"/>
    <property type="project" value="UniProtKB-UniRule"/>
</dbReference>
<dbReference type="GO" id="GO:0008270">
    <property type="term" value="F:zinc ion binding"/>
    <property type="evidence" value="ECO:0007669"/>
    <property type="project" value="UniProtKB-UniRule"/>
</dbReference>
<dbReference type="GO" id="GO:0044209">
    <property type="term" value="P:AMP salvage"/>
    <property type="evidence" value="ECO:0007669"/>
    <property type="project" value="UniProtKB-UniRule"/>
</dbReference>
<dbReference type="CDD" id="cd01428">
    <property type="entry name" value="ADK"/>
    <property type="match status" value="1"/>
</dbReference>
<dbReference type="FunFam" id="3.40.50.300:FF:000106">
    <property type="entry name" value="Adenylate kinase mitochondrial"/>
    <property type="match status" value="1"/>
</dbReference>
<dbReference type="Gene3D" id="3.40.50.300">
    <property type="entry name" value="P-loop containing nucleotide triphosphate hydrolases"/>
    <property type="match status" value="1"/>
</dbReference>
<dbReference type="HAMAP" id="MF_00235">
    <property type="entry name" value="Adenylate_kinase_Adk"/>
    <property type="match status" value="1"/>
</dbReference>
<dbReference type="InterPro" id="IPR006259">
    <property type="entry name" value="Adenyl_kin_sub"/>
</dbReference>
<dbReference type="InterPro" id="IPR000850">
    <property type="entry name" value="Adenylat/UMP-CMP_kin"/>
</dbReference>
<dbReference type="InterPro" id="IPR033690">
    <property type="entry name" value="Adenylat_kinase_CS"/>
</dbReference>
<dbReference type="InterPro" id="IPR007862">
    <property type="entry name" value="Adenylate_kinase_lid-dom"/>
</dbReference>
<dbReference type="InterPro" id="IPR027417">
    <property type="entry name" value="P-loop_NTPase"/>
</dbReference>
<dbReference type="NCBIfam" id="TIGR01351">
    <property type="entry name" value="adk"/>
    <property type="match status" value="1"/>
</dbReference>
<dbReference type="NCBIfam" id="NF001387">
    <property type="entry name" value="PRK00279.2-5"/>
    <property type="match status" value="1"/>
</dbReference>
<dbReference type="PANTHER" id="PTHR23359">
    <property type="entry name" value="NUCLEOTIDE KINASE"/>
    <property type="match status" value="1"/>
</dbReference>
<dbReference type="Pfam" id="PF00406">
    <property type="entry name" value="ADK"/>
    <property type="match status" value="1"/>
</dbReference>
<dbReference type="Pfam" id="PF05191">
    <property type="entry name" value="ADK_lid"/>
    <property type="match status" value="1"/>
</dbReference>
<dbReference type="PRINTS" id="PR00094">
    <property type="entry name" value="ADENYLTKNASE"/>
</dbReference>
<dbReference type="SUPFAM" id="SSF52540">
    <property type="entry name" value="P-loop containing nucleoside triphosphate hydrolases"/>
    <property type="match status" value="1"/>
</dbReference>
<dbReference type="PROSITE" id="PS00113">
    <property type="entry name" value="ADENYLATE_KINASE"/>
    <property type="match status" value="1"/>
</dbReference>
<gene>
    <name evidence="1" type="primary">adk</name>
    <name type="ordered locus">TSIB_0835</name>
</gene>
<protein>
    <recommendedName>
        <fullName evidence="1">Adenylate kinase</fullName>
        <shortName evidence="1">AK</shortName>
        <ecNumber evidence="1">2.7.4.3</ecNumber>
    </recommendedName>
    <alternativeName>
        <fullName evidence="1">ATP-AMP transphosphorylase</fullName>
    </alternativeName>
    <alternativeName>
        <fullName evidence="1">ATP:AMP phosphotransferase</fullName>
    </alternativeName>
    <alternativeName>
        <fullName evidence="1">Adenylate monophosphate kinase</fullName>
    </alternativeName>
</protein>
<sequence>MNILIFGPPGSGKSTHSRRIIEKYNLEYIASGDIIRAEINKGNALGREMKKYIEKGDLLPDTVINTLVLSRLRKKRENFIIDGYPRTAEQVLALENFLYDHGIRIKLAIDIFISKEESITRISGRRICRQCGAVYHIKYNPSKVPGKCDICGGEVIQREDDTPEIVSRRYDIYINNMEPIIKFYKGQGVYVQINGHGGIEEVWERIRPLLDYIWNREKKKEEFE</sequence>
<keyword id="KW-0067">ATP-binding</keyword>
<keyword id="KW-0963">Cytoplasm</keyword>
<keyword id="KW-0418">Kinase</keyword>
<keyword id="KW-0479">Metal-binding</keyword>
<keyword id="KW-0545">Nucleotide biosynthesis</keyword>
<keyword id="KW-0547">Nucleotide-binding</keyword>
<keyword id="KW-1185">Reference proteome</keyword>
<keyword id="KW-0808">Transferase</keyword>
<keyword id="KW-0862">Zinc</keyword>
<organism>
    <name type="scientific">Thermococcus sibiricus (strain DSM 12597 / MM 739)</name>
    <dbReference type="NCBI Taxonomy" id="604354"/>
    <lineage>
        <taxon>Archaea</taxon>
        <taxon>Methanobacteriati</taxon>
        <taxon>Methanobacteriota</taxon>
        <taxon>Thermococci</taxon>
        <taxon>Thermococcales</taxon>
        <taxon>Thermococcaceae</taxon>
        <taxon>Thermococcus</taxon>
    </lineage>
</organism>
<comment type="function">
    <text evidence="1">Catalyzes the reversible transfer of the terminal phosphate group between ATP and AMP. Plays an important role in cellular energy homeostasis and in adenine nucleotide metabolism.</text>
</comment>
<comment type="catalytic activity">
    <reaction evidence="1">
        <text>AMP + ATP = 2 ADP</text>
        <dbReference type="Rhea" id="RHEA:12973"/>
        <dbReference type="ChEBI" id="CHEBI:30616"/>
        <dbReference type="ChEBI" id="CHEBI:456215"/>
        <dbReference type="ChEBI" id="CHEBI:456216"/>
        <dbReference type="EC" id="2.7.4.3"/>
    </reaction>
</comment>
<comment type="pathway">
    <text evidence="1">Purine metabolism; AMP biosynthesis via salvage pathway; AMP from ADP: step 1/1.</text>
</comment>
<comment type="subunit">
    <text evidence="1">Monomer.</text>
</comment>
<comment type="subcellular location">
    <subcellularLocation>
        <location evidence="1">Cytoplasm</location>
    </subcellularLocation>
</comment>
<comment type="domain">
    <text evidence="1">Consists of three domains, a large central CORE domain and two small peripheral domains, NMPbind and LID, which undergo movements during catalysis. The LID domain closes over the site of phosphoryl transfer upon ATP binding. Assembling and dissambling the active center during each catalytic cycle provides an effective means to prevent ATP hydrolysis. Some bacteria have evolved a zinc-coordinating structure that stabilizes the LID domain.</text>
</comment>
<comment type="similarity">
    <text evidence="1">Belongs to the adenylate kinase family.</text>
</comment>
<feature type="chain" id="PRO_1000204430" description="Adenylate kinase">
    <location>
        <begin position="1"/>
        <end position="224"/>
    </location>
</feature>
<feature type="region of interest" description="NMP" evidence="1">
    <location>
        <begin position="30"/>
        <end position="59"/>
    </location>
</feature>
<feature type="region of interest" description="LID" evidence="1">
    <location>
        <begin position="124"/>
        <end position="161"/>
    </location>
</feature>
<feature type="binding site" evidence="1">
    <location>
        <begin position="10"/>
        <end position="15"/>
    </location>
    <ligand>
        <name>ATP</name>
        <dbReference type="ChEBI" id="CHEBI:30616"/>
    </ligand>
</feature>
<feature type="binding site" evidence="1">
    <location>
        <position position="31"/>
    </location>
    <ligand>
        <name>AMP</name>
        <dbReference type="ChEBI" id="CHEBI:456215"/>
    </ligand>
</feature>
<feature type="binding site" evidence="1">
    <location>
        <position position="36"/>
    </location>
    <ligand>
        <name>AMP</name>
        <dbReference type="ChEBI" id="CHEBI:456215"/>
    </ligand>
</feature>
<feature type="binding site" evidence="1">
    <location>
        <begin position="57"/>
        <end position="59"/>
    </location>
    <ligand>
        <name>AMP</name>
        <dbReference type="ChEBI" id="CHEBI:456215"/>
    </ligand>
</feature>
<feature type="binding site" evidence="1">
    <location>
        <begin position="83"/>
        <end position="86"/>
    </location>
    <ligand>
        <name>AMP</name>
        <dbReference type="ChEBI" id="CHEBI:456215"/>
    </ligand>
</feature>
<feature type="binding site" evidence="1">
    <location>
        <position position="90"/>
    </location>
    <ligand>
        <name>AMP</name>
        <dbReference type="ChEBI" id="CHEBI:456215"/>
    </ligand>
</feature>
<feature type="binding site" evidence="1">
    <location>
        <position position="125"/>
    </location>
    <ligand>
        <name>ATP</name>
        <dbReference type="ChEBI" id="CHEBI:30616"/>
    </ligand>
</feature>
<feature type="binding site" evidence="1">
    <location>
        <position position="128"/>
    </location>
    <ligand>
        <name>Zn(2+)</name>
        <dbReference type="ChEBI" id="CHEBI:29105"/>
        <note>structural</note>
    </ligand>
</feature>
<feature type="binding site" evidence="1">
    <location>
        <position position="131"/>
    </location>
    <ligand>
        <name>Zn(2+)</name>
        <dbReference type="ChEBI" id="CHEBI:29105"/>
        <note>structural</note>
    </ligand>
</feature>
<feature type="binding site" evidence="1">
    <location>
        <begin position="134"/>
        <end position="135"/>
    </location>
    <ligand>
        <name>ATP</name>
        <dbReference type="ChEBI" id="CHEBI:30616"/>
    </ligand>
</feature>
<feature type="binding site" evidence="1">
    <location>
        <position position="148"/>
    </location>
    <ligand>
        <name>Zn(2+)</name>
        <dbReference type="ChEBI" id="CHEBI:29105"/>
        <note>structural</note>
    </ligand>
</feature>
<feature type="binding site" evidence="1">
    <location>
        <position position="151"/>
    </location>
    <ligand>
        <name>Zn(2+)</name>
        <dbReference type="ChEBI" id="CHEBI:29105"/>
        <note>structural</note>
    </ligand>
</feature>
<feature type="binding site" evidence="1">
    <location>
        <position position="158"/>
    </location>
    <ligand>
        <name>AMP</name>
        <dbReference type="ChEBI" id="CHEBI:456215"/>
    </ligand>
</feature>
<feature type="binding site" evidence="1">
    <location>
        <position position="169"/>
    </location>
    <ligand>
        <name>AMP</name>
        <dbReference type="ChEBI" id="CHEBI:456215"/>
    </ligand>
</feature>
<feature type="binding site" evidence="1">
    <location>
        <position position="197"/>
    </location>
    <ligand>
        <name>ATP</name>
        <dbReference type="ChEBI" id="CHEBI:30616"/>
    </ligand>
</feature>
<proteinExistence type="inferred from homology"/>
<accession>C6A2Q1</accession>
<name>KAD_THESM</name>
<evidence type="ECO:0000255" key="1">
    <source>
        <dbReference type="HAMAP-Rule" id="MF_00235"/>
    </source>
</evidence>
<reference key="1">
    <citation type="journal article" date="2009" name="Appl. Environ. Microbiol.">
        <title>Metabolic versatility and indigenous origin of the archaeon Thermococcus sibiricus, isolated from a siberian oil reservoir, as revealed by genome analysis.</title>
        <authorList>
            <person name="Mardanov A.V."/>
            <person name="Ravin N.V."/>
            <person name="Svetlitchnyi V.A."/>
            <person name="Beletsky A.V."/>
            <person name="Miroshnichenko M.L."/>
            <person name="Bonch-Osmolovskaya E.A."/>
            <person name="Skryabin K.G."/>
        </authorList>
    </citation>
    <scope>NUCLEOTIDE SEQUENCE [LARGE SCALE GENOMIC DNA]</scope>
    <source>
        <strain>DSM 12597 / MM 739</strain>
    </source>
</reference>